<evidence type="ECO:0000255" key="1">
    <source>
        <dbReference type="HAMAP-Rule" id="MF_01337"/>
    </source>
</evidence>
<evidence type="ECO:0000305" key="2"/>
<dbReference type="EMBL" id="CU207211">
    <property type="protein sequence ID" value="CAL63259.1"/>
    <property type="molecule type" value="Genomic_DNA"/>
</dbReference>
<dbReference type="SMR" id="A4G9S2"/>
<dbReference type="STRING" id="204773.HEAR3150"/>
<dbReference type="KEGG" id="har:HEAR3150"/>
<dbReference type="eggNOG" id="COG0256">
    <property type="taxonomic scope" value="Bacteria"/>
</dbReference>
<dbReference type="HOGENOM" id="CLU_098841_0_1_4"/>
<dbReference type="OrthoDB" id="9810939at2"/>
<dbReference type="Proteomes" id="UP000006697">
    <property type="component" value="Chromosome"/>
</dbReference>
<dbReference type="GO" id="GO:0022625">
    <property type="term" value="C:cytosolic large ribosomal subunit"/>
    <property type="evidence" value="ECO:0007669"/>
    <property type="project" value="TreeGrafter"/>
</dbReference>
<dbReference type="GO" id="GO:0008097">
    <property type="term" value="F:5S rRNA binding"/>
    <property type="evidence" value="ECO:0007669"/>
    <property type="project" value="TreeGrafter"/>
</dbReference>
<dbReference type="GO" id="GO:0003735">
    <property type="term" value="F:structural constituent of ribosome"/>
    <property type="evidence" value="ECO:0007669"/>
    <property type="project" value="InterPro"/>
</dbReference>
<dbReference type="GO" id="GO:0006412">
    <property type="term" value="P:translation"/>
    <property type="evidence" value="ECO:0007669"/>
    <property type="project" value="UniProtKB-UniRule"/>
</dbReference>
<dbReference type="CDD" id="cd00432">
    <property type="entry name" value="Ribosomal_L18_L5e"/>
    <property type="match status" value="1"/>
</dbReference>
<dbReference type="FunFam" id="3.30.420.100:FF:000001">
    <property type="entry name" value="50S ribosomal protein L18"/>
    <property type="match status" value="1"/>
</dbReference>
<dbReference type="Gene3D" id="3.30.420.100">
    <property type="match status" value="1"/>
</dbReference>
<dbReference type="HAMAP" id="MF_01337_B">
    <property type="entry name" value="Ribosomal_uL18_B"/>
    <property type="match status" value="1"/>
</dbReference>
<dbReference type="InterPro" id="IPR004389">
    <property type="entry name" value="Ribosomal_uL18_bac-type"/>
</dbReference>
<dbReference type="InterPro" id="IPR005484">
    <property type="entry name" value="Ribosomal_uL18_bac/euk"/>
</dbReference>
<dbReference type="NCBIfam" id="TIGR00060">
    <property type="entry name" value="L18_bact"/>
    <property type="match status" value="1"/>
</dbReference>
<dbReference type="PANTHER" id="PTHR12899">
    <property type="entry name" value="39S RIBOSOMAL PROTEIN L18, MITOCHONDRIAL"/>
    <property type="match status" value="1"/>
</dbReference>
<dbReference type="PANTHER" id="PTHR12899:SF3">
    <property type="entry name" value="LARGE RIBOSOMAL SUBUNIT PROTEIN UL18M"/>
    <property type="match status" value="1"/>
</dbReference>
<dbReference type="Pfam" id="PF00861">
    <property type="entry name" value="Ribosomal_L18p"/>
    <property type="match status" value="1"/>
</dbReference>
<dbReference type="SUPFAM" id="SSF53137">
    <property type="entry name" value="Translational machinery components"/>
    <property type="match status" value="1"/>
</dbReference>
<organism>
    <name type="scientific">Herminiimonas arsenicoxydans</name>
    <dbReference type="NCBI Taxonomy" id="204773"/>
    <lineage>
        <taxon>Bacteria</taxon>
        <taxon>Pseudomonadati</taxon>
        <taxon>Pseudomonadota</taxon>
        <taxon>Betaproteobacteria</taxon>
        <taxon>Burkholderiales</taxon>
        <taxon>Oxalobacteraceae</taxon>
        <taxon>Herminiimonas</taxon>
    </lineage>
</organism>
<comment type="function">
    <text evidence="1">This is one of the proteins that bind and probably mediate the attachment of the 5S RNA into the large ribosomal subunit, where it forms part of the central protuberance.</text>
</comment>
<comment type="subunit">
    <text evidence="1">Part of the 50S ribosomal subunit; part of the 5S rRNA/L5/L18/L25 subcomplex. Contacts the 5S and 23S rRNAs.</text>
</comment>
<comment type="similarity">
    <text evidence="1">Belongs to the universal ribosomal protein uL18 family.</text>
</comment>
<accession>A4G9S2</accession>
<keyword id="KW-1185">Reference proteome</keyword>
<keyword id="KW-0687">Ribonucleoprotein</keyword>
<keyword id="KW-0689">Ribosomal protein</keyword>
<keyword id="KW-0694">RNA-binding</keyword>
<keyword id="KW-0699">rRNA-binding</keyword>
<proteinExistence type="inferred from homology"/>
<sequence length="120" mass="12790">MDKKQSRLRRGRQTRAKIAELKVIRLAVHRTNLHIYASIIGPDAKILASASTAEAEVRKELAGQSGAGGNVAAAALVGKRVAEKALKAGIAEVAFDRSGFRYHGRVKAVAEAAREAGLKF</sequence>
<protein>
    <recommendedName>
        <fullName evidence="1">Large ribosomal subunit protein uL18</fullName>
    </recommendedName>
    <alternativeName>
        <fullName evidence="2">50S ribosomal protein L18</fullName>
    </alternativeName>
</protein>
<feature type="chain" id="PRO_1000053036" description="Large ribosomal subunit protein uL18">
    <location>
        <begin position="1"/>
        <end position="120"/>
    </location>
</feature>
<gene>
    <name evidence="1" type="primary">rplR</name>
    <name type="ordered locus">HEAR3150</name>
</gene>
<name>RL18_HERAR</name>
<reference key="1">
    <citation type="journal article" date="2007" name="PLoS Genet.">
        <title>A tale of two oxidation states: bacterial colonization of arsenic-rich environments.</title>
        <authorList>
            <person name="Muller D."/>
            <person name="Medigue C."/>
            <person name="Koechler S."/>
            <person name="Barbe V."/>
            <person name="Barakat M."/>
            <person name="Talla E."/>
            <person name="Bonnefoy V."/>
            <person name="Krin E."/>
            <person name="Arsene-Ploetze F."/>
            <person name="Carapito C."/>
            <person name="Chandler M."/>
            <person name="Cournoyer B."/>
            <person name="Cruveiller S."/>
            <person name="Dossat C."/>
            <person name="Duval S."/>
            <person name="Heymann M."/>
            <person name="Leize E."/>
            <person name="Lieutaud A."/>
            <person name="Lievremont D."/>
            <person name="Makita Y."/>
            <person name="Mangenot S."/>
            <person name="Nitschke W."/>
            <person name="Ortet P."/>
            <person name="Perdrial N."/>
            <person name="Schoepp B."/>
            <person name="Siguier P."/>
            <person name="Simeonova D.D."/>
            <person name="Rouy Z."/>
            <person name="Segurens B."/>
            <person name="Turlin E."/>
            <person name="Vallenet D."/>
            <person name="van Dorsselaer A."/>
            <person name="Weiss S."/>
            <person name="Weissenbach J."/>
            <person name="Lett M.-C."/>
            <person name="Danchin A."/>
            <person name="Bertin P.N."/>
        </authorList>
    </citation>
    <scope>NUCLEOTIDE SEQUENCE [LARGE SCALE GENOMIC DNA]</scope>
    <source>
        <strain>ULPAs1</strain>
    </source>
</reference>